<evidence type="ECO:0000250" key="1"/>
<evidence type="ECO:0000255" key="2">
    <source>
        <dbReference type="PROSITE-ProRule" id="PRU00147"/>
    </source>
</evidence>
<evidence type="ECO:0000256" key="3">
    <source>
        <dbReference type="SAM" id="MobiDB-lite"/>
    </source>
</evidence>
<evidence type="ECO:0000269" key="4">
    <source>
    </source>
</evidence>
<evidence type="ECO:0000269" key="5">
    <source>
    </source>
</evidence>
<evidence type="ECO:0000269" key="6">
    <source>
    </source>
</evidence>
<evidence type="ECO:0000305" key="7"/>
<gene>
    <name type="primary">vps5</name>
    <name type="ORF">SPCPJ732.01</name>
</gene>
<keyword id="KW-0963">Cytoplasm</keyword>
<keyword id="KW-0333">Golgi apparatus</keyword>
<keyword id="KW-0472">Membrane</keyword>
<keyword id="KW-0597">Phosphoprotein</keyword>
<keyword id="KW-0653">Protein transport</keyword>
<keyword id="KW-1185">Reference proteome</keyword>
<keyword id="KW-0749">Sporulation</keyword>
<keyword id="KW-0813">Transport</keyword>
<feature type="chain" id="PRO_0000213803" description="Vacuolar protein sorting-associated protein vps5">
    <location>
        <begin position="1"/>
        <end position="576"/>
    </location>
</feature>
<feature type="domain" description="PX" evidence="2">
    <location>
        <begin position="200"/>
        <end position="317"/>
    </location>
</feature>
<feature type="region of interest" description="Disordered" evidence="3">
    <location>
        <begin position="1"/>
        <end position="60"/>
    </location>
</feature>
<feature type="region of interest" description="Disordered" evidence="3">
    <location>
        <begin position="156"/>
        <end position="198"/>
    </location>
</feature>
<feature type="compositionally biased region" description="Polar residues" evidence="3">
    <location>
        <begin position="156"/>
        <end position="169"/>
    </location>
</feature>
<feature type="compositionally biased region" description="Low complexity" evidence="3">
    <location>
        <begin position="170"/>
        <end position="181"/>
    </location>
</feature>
<feature type="binding site" evidence="1">
    <location>
        <position position="244"/>
    </location>
    <ligand>
        <name>a 1,2-diacyl-sn-glycero-3-phospho-(1D-myo-inositol-3-phosphate)</name>
        <dbReference type="ChEBI" id="CHEBI:58088"/>
    </ligand>
</feature>
<feature type="binding site" evidence="1">
    <location>
        <position position="270"/>
    </location>
    <ligand>
        <name>a 1,2-diacyl-sn-glycero-3-phospho-(1D-myo-inositol-3-phosphate)</name>
        <dbReference type="ChEBI" id="CHEBI:58088"/>
    </ligand>
</feature>
<feature type="binding site" evidence="1">
    <location>
        <position position="284"/>
    </location>
    <ligand>
        <name>a 1,2-diacyl-sn-glycero-3-phospho-(1D-myo-inositol-3-phosphate)</name>
        <dbReference type="ChEBI" id="CHEBI:58088"/>
    </ligand>
</feature>
<feature type="modified residue" description="Phosphothreonine" evidence="6">
    <location>
        <position position="55"/>
    </location>
</feature>
<feature type="modified residue" description="Phosphoserine" evidence="6">
    <location>
        <position position="332"/>
    </location>
</feature>
<comment type="function">
    <text evidence="4">Required for efficient sporulation target of PtdIns(3)P in vesicle transport required for onset of the forespore membrane formation.</text>
</comment>
<comment type="function">
    <text evidence="4">Plays a role in vesicular protein sorting. Required for the endosome-to-Golgi retrieval of the vacuolar protein sorting receptor pep1/vps10. Component of the membrane-associated retromer complex which is essential in endosome-to-Golgi retrograde transport. The vps29-vps26-vps35 subcomplex may be involved in cargo selection.</text>
</comment>
<comment type="subunit">
    <text evidence="1">Component of the retromer complex which consists of vps29, vps26, vps35, vps5 and vps17.</text>
</comment>
<comment type="subcellular location">
    <subcellularLocation>
        <location evidence="5">Cytoplasm</location>
    </subcellularLocation>
    <subcellularLocation>
        <location evidence="5">Golgi apparatus</location>
    </subcellularLocation>
    <subcellularLocation>
        <location evidence="1">Membrane</location>
        <topology evidence="1">Peripheral membrane protein</topology>
        <orientation evidence="1">Cytoplasmic side</orientation>
    </subcellularLocation>
</comment>
<comment type="domain">
    <text evidence="1">The PX domain binds phosphatidylinositol 3-phosphate which is necessary for peripheral membrane localization.</text>
</comment>
<comment type="similarity">
    <text evidence="7">Belongs to the sorting nexin family.</text>
</comment>
<proteinExistence type="evidence at protein level"/>
<sequence>MLGHNIYEEDDAFNPFADSVSPLNPPKTDQEPSAEGVEEESPNVQASPPKTHIYTSPRKRSVNLKSLPFETLTLDSAPLGPLQFSDAPSMAPENNRLEVGLNTKINPLKGSSPALNADFSANKPWISEVNSFSPSPIGATENPTIPNSEQTVDTLDAASSSAPNFTHTVSSASSQKQGSTSLTDTENQKAHPAAAPQSLTPFYIQVHDPHTVKEITKSHTVYSVSTRLEEHNQPSVSNVTVQRRYNDFAFLYQLLSNNHPGCIIPPIPEKQVVGRFDDEFIEQRRAALEVMLRKISAHPVLRDDYSFKLFLEAETFDPRMTHRTTLIESSSSPLRSGPSTSGLLDSFTSAFHTSGSSKFSEQDPILIEAKDTLDSLETQLKSVYHALLLSIDQRIQFASAIHDFGEAVGNLSLVDLEPTLSSKFDGLSQLQVELRFVQERKVAQDNLTLGTTLEEYIRYVESAKNAFTTRQKLWQTWQSSVQAVSRAKTQLEKCKKQAKSQQKSLPYLEEQYEKYRAKAADLEKEFSESTTLLKRDLSSLTTSRVDDLKASVETWLESAIESQKEIIERWESFLDQ</sequence>
<dbReference type="EMBL" id="CU329672">
    <property type="protein sequence ID" value="CAC34987.1"/>
    <property type="molecule type" value="Genomic_DNA"/>
</dbReference>
<dbReference type="RefSeq" id="NP_587929.1">
    <property type="nucleotide sequence ID" value="NM_001022920.2"/>
</dbReference>
<dbReference type="SMR" id="Q9C0U7"/>
<dbReference type="BioGRID" id="276113">
    <property type="interactions" value="147"/>
</dbReference>
<dbReference type="FunCoup" id="Q9C0U7">
    <property type="interactions" value="618"/>
</dbReference>
<dbReference type="STRING" id="284812.Q9C0U7"/>
<dbReference type="iPTMnet" id="Q9C0U7"/>
<dbReference type="PaxDb" id="4896-SPCPJ732.01.1"/>
<dbReference type="EnsemblFungi" id="SPCPJ732.01.1">
    <property type="protein sequence ID" value="SPCPJ732.01.1:pep"/>
    <property type="gene ID" value="SPCPJ732.01"/>
</dbReference>
<dbReference type="GeneID" id="2539552"/>
<dbReference type="KEGG" id="spo:2539552"/>
<dbReference type="PomBase" id="SPCPJ732.01">
    <property type="gene designation" value="vps5"/>
</dbReference>
<dbReference type="VEuPathDB" id="FungiDB:SPCPJ732.01"/>
<dbReference type="eggNOG" id="KOG2273">
    <property type="taxonomic scope" value="Eukaryota"/>
</dbReference>
<dbReference type="HOGENOM" id="CLU_014571_2_0_1"/>
<dbReference type="InParanoid" id="Q9C0U7"/>
<dbReference type="OMA" id="MLVNHRK"/>
<dbReference type="PhylomeDB" id="Q9C0U7"/>
<dbReference type="PRO" id="PR:Q9C0U7"/>
<dbReference type="Proteomes" id="UP000002485">
    <property type="component" value="Chromosome III"/>
</dbReference>
<dbReference type="GO" id="GO:0005737">
    <property type="term" value="C:cytoplasm"/>
    <property type="evidence" value="ECO:0007005"/>
    <property type="project" value="PomBase"/>
</dbReference>
<dbReference type="GO" id="GO:0005829">
    <property type="term" value="C:cytosol"/>
    <property type="evidence" value="ECO:0007005"/>
    <property type="project" value="PomBase"/>
</dbReference>
<dbReference type="GO" id="GO:0005768">
    <property type="term" value="C:endosome"/>
    <property type="evidence" value="ECO:0000315"/>
    <property type="project" value="PomBase"/>
</dbReference>
<dbReference type="GO" id="GO:0005794">
    <property type="term" value="C:Golgi apparatus"/>
    <property type="evidence" value="ECO:0007669"/>
    <property type="project" value="UniProtKB-SubCell"/>
</dbReference>
<dbReference type="GO" id="GO:0005628">
    <property type="term" value="C:prospore membrane"/>
    <property type="evidence" value="ECO:0000314"/>
    <property type="project" value="PomBase"/>
</dbReference>
<dbReference type="GO" id="GO:0030904">
    <property type="term" value="C:retromer complex"/>
    <property type="evidence" value="ECO:0000315"/>
    <property type="project" value="PomBase"/>
</dbReference>
<dbReference type="GO" id="GO:0035091">
    <property type="term" value="F:phosphatidylinositol binding"/>
    <property type="evidence" value="ECO:0000318"/>
    <property type="project" value="GO_Central"/>
</dbReference>
<dbReference type="GO" id="GO:0032120">
    <property type="term" value="P:ascospore-type prospore membrane formation"/>
    <property type="evidence" value="ECO:0000315"/>
    <property type="project" value="PomBase"/>
</dbReference>
<dbReference type="GO" id="GO:0006886">
    <property type="term" value="P:intracellular protein transport"/>
    <property type="evidence" value="ECO:0000315"/>
    <property type="project" value="PomBase"/>
</dbReference>
<dbReference type="GO" id="GO:0045053">
    <property type="term" value="P:protein retention in Golgi apparatus"/>
    <property type="evidence" value="ECO:0000318"/>
    <property type="project" value="GO_Central"/>
</dbReference>
<dbReference type="GO" id="GO:0042147">
    <property type="term" value="P:retrograde transport, endosome to Golgi"/>
    <property type="evidence" value="ECO:0000315"/>
    <property type="project" value="PomBase"/>
</dbReference>
<dbReference type="GO" id="GO:0016192">
    <property type="term" value="P:vesicle-mediated transport"/>
    <property type="evidence" value="ECO:0000315"/>
    <property type="project" value="PomBase"/>
</dbReference>
<dbReference type="CDD" id="cd07627">
    <property type="entry name" value="BAR_Vps5p"/>
    <property type="match status" value="1"/>
</dbReference>
<dbReference type="CDD" id="cd06861">
    <property type="entry name" value="PX_Vps5p"/>
    <property type="match status" value="1"/>
</dbReference>
<dbReference type="FunFam" id="1.20.1270.60:FF:000022">
    <property type="entry name" value="Sorting nexin 3 protein"/>
    <property type="match status" value="1"/>
</dbReference>
<dbReference type="Gene3D" id="1.20.1270.60">
    <property type="entry name" value="Arfaptin homology (AH) domain/BAR domain"/>
    <property type="match status" value="1"/>
</dbReference>
<dbReference type="Gene3D" id="3.30.1520.10">
    <property type="entry name" value="Phox-like domain"/>
    <property type="match status" value="1"/>
</dbReference>
<dbReference type="InterPro" id="IPR027267">
    <property type="entry name" value="AH/BAR_dom_sf"/>
</dbReference>
<dbReference type="InterPro" id="IPR035803">
    <property type="entry name" value="BAR_Vps5"/>
</dbReference>
<dbReference type="InterPro" id="IPR001683">
    <property type="entry name" value="PX_dom"/>
</dbReference>
<dbReference type="InterPro" id="IPR036871">
    <property type="entry name" value="PX_dom_sf"/>
</dbReference>
<dbReference type="InterPro" id="IPR037868">
    <property type="entry name" value="PX_Vps5"/>
</dbReference>
<dbReference type="InterPro" id="IPR015404">
    <property type="entry name" value="Vps5_C"/>
</dbReference>
<dbReference type="PANTHER" id="PTHR10555:SF170">
    <property type="entry name" value="FI18122P1"/>
    <property type="match status" value="1"/>
</dbReference>
<dbReference type="PANTHER" id="PTHR10555">
    <property type="entry name" value="SORTING NEXIN"/>
    <property type="match status" value="1"/>
</dbReference>
<dbReference type="Pfam" id="PF00787">
    <property type="entry name" value="PX"/>
    <property type="match status" value="1"/>
</dbReference>
<dbReference type="Pfam" id="PF09325">
    <property type="entry name" value="Vps5"/>
    <property type="match status" value="1"/>
</dbReference>
<dbReference type="SMART" id="SM00312">
    <property type="entry name" value="PX"/>
    <property type="match status" value="1"/>
</dbReference>
<dbReference type="SUPFAM" id="SSF64268">
    <property type="entry name" value="PX domain"/>
    <property type="match status" value="1"/>
</dbReference>
<dbReference type="PROSITE" id="PS50195">
    <property type="entry name" value="PX"/>
    <property type="match status" value="1"/>
</dbReference>
<protein>
    <recommendedName>
        <fullName>Vacuolar protein sorting-associated protein vps5</fullName>
    </recommendedName>
</protein>
<organism>
    <name type="scientific">Schizosaccharomyces pombe (strain 972 / ATCC 24843)</name>
    <name type="common">Fission yeast</name>
    <dbReference type="NCBI Taxonomy" id="284812"/>
    <lineage>
        <taxon>Eukaryota</taxon>
        <taxon>Fungi</taxon>
        <taxon>Dikarya</taxon>
        <taxon>Ascomycota</taxon>
        <taxon>Taphrinomycotina</taxon>
        <taxon>Schizosaccharomycetes</taxon>
        <taxon>Schizosaccharomycetales</taxon>
        <taxon>Schizosaccharomycetaceae</taxon>
        <taxon>Schizosaccharomyces</taxon>
    </lineage>
</organism>
<name>VPS5_SCHPO</name>
<reference key="1">
    <citation type="journal article" date="2002" name="Nature">
        <title>The genome sequence of Schizosaccharomyces pombe.</title>
        <authorList>
            <person name="Wood V."/>
            <person name="Gwilliam R."/>
            <person name="Rajandream M.A."/>
            <person name="Lyne M.H."/>
            <person name="Lyne R."/>
            <person name="Stewart A."/>
            <person name="Sgouros J.G."/>
            <person name="Peat N."/>
            <person name="Hayles J."/>
            <person name="Baker S.G."/>
            <person name="Basham D."/>
            <person name="Bowman S."/>
            <person name="Brooks K."/>
            <person name="Brown D."/>
            <person name="Brown S."/>
            <person name="Chillingworth T."/>
            <person name="Churcher C.M."/>
            <person name="Collins M."/>
            <person name="Connor R."/>
            <person name="Cronin A."/>
            <person name="Davis P."/>
            <person name="Feltwell T."/>
            <person name="Fraser A."/>
            <person name="Gentles S."/>
            <person name="Goble A."/>
            <person name="Hamlin N."/>
            <person name="Harris D.E."/>
            <person name="Hidalgo J."/>
            <person name="Hodgson G."/>
            <person name="Holroyd S."/>
            <person name="Hornsby T."/>
            <person name="Howarth S."/>
            <person name="Huckle E.J."/>
            <person name="Hunt S."/>
            <person name="Jagels K."/>
            <person name="James K.D."/>
            <person name="Jones L."/>
            <person name="Jones M."/>
            <person name="Leather S."/>
            <person name="McDonald S."/>
            <person name="McLean J."/>
            <person name="Mooney P."/>
            <person name="Moule S."/>
            <person name="Mungall K.L."/>
            <person name="Murphy L.D."/>
            <person name="Niblett D."/>
            <person name="Odell C."/>
            <person name="Oliver K."/>
            <person name="O'Neil S."/>
            <person name="Pearson D."/>
            <person name="Quail M.A."/>
            <person name="Rabbinowitsch E."/>
            <person name="Rutherford K.M."/>
            <person name="Rutter S."/>
            <person name="Saunders D."/>
            <person name="Seeger K."/>
            <person name="Sharp S."/>
            <person name="Skelton J."/>
            <person name="Simmonds M.N."/>
            <person name="Squares R."/>
            <person name="Squares S."/>
            <person name="Stevens K."/>
            <person name="Taylor K."/>
            <person name="Taylor R.G."/>
            <person name="Tivey A."/>
            <person name="Walsh S.V."/>
            <person name="Warren T."/>
            <person name="Whitehead S."/>
            <person name="Woodward J.R."/>
            <person name="Volckaert G."/>
            <person name="Aert R."/>
            <person name="Robben J."/>
            <person name="Grymonprez B."/>
            <person name="Weltjens I."/>
            <person name="Vanstreels E."/>
            <person name="Rieger M."/>
            <person name="Schaefer M."/>
            <person name="Mueller-Auer S."/>
            <person name="Gabel C."/>
            <person name="Fuchs M."/>
            <person name="Duesterhoeft A."/>
            <person name="Fritzc C."/>
            <person name="Holzer E."/>
            <person name="Moestl D."/>
            <person name="Hilbert H."/>
            <person name="Borzym K."/>
            <person name="Langer I."/>
            <person name="Beck A."/>
            <person name="Lehrach H."/>
            <person name="Reinhardt R."/>
            <person name="Pohl T.M."/>
            <person name="Eger P."/>
            <person name="Zimmermann W."/>
            <person name="Wedler H."/>
            <person name="Wambutt R."/>
            <person name="Purnelle B."/>
            <person name="Goffeau A."/>
            <person name="Cadieu E."/>
            <person name="Dreano S."/>
            <person name="Gloux S."/>
            <person name="Lelaure V."/>
            <person name="Mottier S."/>
            <person name="Galibert F."/>
            <person name="Aves S.J."/>
            <person name="Xiang Z."/>
            <person name="Hunt C."/>
            <person name="Moore K."/>
            <person name="Hurst S.M."/>
            <person name="Lucas M."/>
            <person name="Rochet M."/>
            <person name="Gaillardin C."/>
            <person name="Tallada V.A."/>
            <person name="Garzon A."/>
            <person name="Thode G."/>
            <person name="Daga R.R."/>
            <person name="Cruzado L."/>
            <person name="Jimenez J."/>
            <person name="Sanchez M."/>
            <person name="del Rey F."/>
            <person name="Benito J."/>
            <person name="Dominguez A."/>
            <person name="Revuelta J.L."/>
            <person name="Moreno S."/>
            <person name="Armstrong J."/>
            <person name="Forsburg S.L."/>
            <person name="Cerutti L."/>
            <person name="Lowe T."/>
            <person name="McCombie W.R."/>
            <person name="Paulsen I."/>
            <person name="Potashkin J."/>
            <person name="Shpakovski G.V."/>
            <person name="Ussery D."/>
            <person name="Barrell B.G."/>
            <person name="Nurse P."/>
        </authorList>
    </citation>
    <scope>NUCLEOTIDE SEQUENCE [LARGE SCALE GENOMIC DNA]</scope>
    <source>
        <strain>972 / ATCC 24843</strain>
    </source>
</reference>
<reference key="2">
    <citation type="journal article" date="2004" name="Genes Cells">
        <title>Sorting nexin homologues are targets of phosphatidylinositol 3-phosphate in sporulation of Schizosaccharomyces pombe.</title>
        <authorList>
            <person name="Koga T."/>
            <person name="Onishi M."/>
            <person name="Nakamura Y."/>
            <person name="Hirata A."/>
            <person name="Nakamura T."/>
            <person name="Shimoda C."/>
            <person name="Iwaki T."/>
            <person name="Takegawa K."/>
            <person name="Fukui Y."/>
        </authorList>
    </citation>
    <scope>CHARACTERIZATION</scope>
</reference>
<reference key="3">
    <citation type="journal article" date="2006" name="Microbiology">
        <title>Vacuolar protein sorting receptor in Schizosaccharomyces pombe.</title>
        <authorList>
            <person name="Iwaki T."/>
            <person name="Hosomi A."/>
            <person name="Tokudomi S."/>
            <person name="Kusunoki Y."/>
            <person name="Fujita Y."/>
            <person name="Giga-Hama Y."/>
            <person name="Tanaka N."/>
            <person name="Takegawa K."/>
        </authorList>
    </citation>
    <scope>FUNCTION</scope>
</reference>
<reference key="4">
    <citation type="journal article" date="2006" name="Nat. Biotechnol.">
        <title>ORFeome cloning and global analysis of protein localization in the fission yeast Schizosaccharomyces pombe.</title>
        <authorList>
            <person name="Matsuyama A."/>
            <person name="Arai R."/>
            <person name="Yashiroda Y."/>
            <person name="Shirai A."/>
            <person name="Kamata A."/>
            <person name="Sekido S."/>
            <person name="Kobayashi Y."/>
            <person name="Hashimoto A."/>
            <person name="Hamamoto M."/>
            <person name="Hiraoka Y."/>
            <person name="Horinouchi S."/>
            <person name="Yoshida M."/>
        </authorList>
    </citation>
    <scope>SUBCELLULAR LOCATION [LARGE SCALE ANALYSIS]</scope>
</reference>
<reference key="5">
    <citation type="journal article" date="2008" name="J. Proteome Res.">
        <title>Phosphoproteome analysis of fission yeast.</title>
        <authorList>
            <person name="Wilson-Grady J.T."/>
            <person name="Villen J."/>
            <person name="Gygi S.P."/>
        </authorList>
    </citation>
    <scope>PHOSPHORYLATION [LARGE SCALE ANALYSIS] AT THR-55 AND SER-332</scope>
    <scope>IDENTIFICATION BY MASS SPECTROMETRY</scope>
</reference>
<accession>Q9C0U7</accession>